<gene>
    <name type="primary">FBLIM1</name>
    <name type="synonym">FBLP1</name>
</gene>
<proteinExistence type="evidence at protein level"/>
<name>FBLI1_HUMAN</name>
<protein>
    <recommendedName>
        <fullName>Filamin-binding LIM protein 1</fullName>
        <shortName>FBLP-1</shortName>
    </recommendedName>
    <alternativeName>
        <fullName>Migfilin</fullName>
    </alternativeName>
    <alternativeName>
        <fullName>Mitogen-inducible 2-interacting protein</fullName>
        <shortName>MIG2-interacting protein</shortName>
    </alternativeName>
</protein>
<dbReference type="EMBL" id="AY180161">
    <property type="protein sequence ID" value="AAO49012.1"/>
    <property type="molecule type" value="mRNA"/>
</dbReference>
<dbReference type="EMBL" id="AF459643">
    <property type="protein sequence ID" value="AAO15549.1"/>
    <property type="molecule type" value="mRNA"/>
</dbReference>
<dbReference type="EMBL" id="AK027444">
    <property type="protein sequence ID" value="BAB55115.1"/>
    <property type="molecule type" value="mRNA"/>
</dbReference>
<dbReference type="EMBL" id="AK055259">
    <property type="protein sequence ID" value="BAG51492.1"/>
    <property type="molecule type" value="mRNA"/>
</dbReference>
<dbReference type="EMBL" id="AL450998">
    <property type="status" value="NOT_ANNOTATED_CDS"/>
    <property type="molecule type" value="Genomic_DNA"/>
</dbReference>
<dbReference type="EMBL" id="BC019895">
    <property type="protein sequence ID" value="AAH19895.1"/>
    <property type="molecule type" value="mRNA"/>
</dbReference>
<dbReference type="EMBL" id="AL133035">
    <property type="protein sequence ID" value="CAB61365.1"/>
    <property type="molecule type" value="mRNA"/>
</dbReference>
<dbReference type="CCDS" id="CCDS163.1">
    <molecule id="Q8WUP2-1"/>
</dbReference>
<dbReference type="CCDS" id="CCDS30609.1">
    <molecule id="Q8WUP2-3"/>
</dbReference>
<dbReference type="CCDS" id="CCDS44064.1">
    <molecule id="Q8WUP2-2"/>
</dbReference>
<dbReference type="PIR" id="T42678">
    <property type="entry name" value="T42678"/>
</dbReference>
<dbReference type="RefSeq" id="NP_001019386.1">
    <molecule id="Q8WUP2-2"/>
    <property type="nucleotide sequence ID" value="NM_001024215.1"/>
</dbReference>
<dbReference type="RefSeq" id="NP_001019387.1">
    <molecule id="Q8WUP2-3"/>
    <property type="nucleotide sequence ID" value="NM_001024216.3"/>
</dbReference>
<dbReference type="RefSeq" id="NP_001337080.1">
    <molecule id="Q8WUP2-1"/>
    <property type="nucleotide sequence ID" value="NM_001350151.2"/>
</dbReference>
<dbReference type="RefSeq" id="NP_060026.2">
    <molecule id="Q8WUP2-1"/>
    <property type="nucleotide sequence ID" value="NM_017556.4"/>
</dbReference>
<dbReference type="RefSeq" id="XP_005245957.1">
    <molecule id="Q8WUP2-2"/>
    <property type="nucleotide sequence ID" value="XM_005245900.2"/>
</dbReference>
<dbReference type="RefSeq" id="XP_005245958.1">
    <molecule id="Q8WUP2-2"/>
    <property type="nucleotide sequence ID" value="XM_005245901.2"/>
</dbReference>
<dbReference type="RefSeq" id="XP_005245959.1">
    <molecule id="Q8WUP2-2"/>
    <property type="nucleotide sequence ID" value="XM_005245902.2"/>
</dbReference>
<dbReference type="RefSeq" id="XP_005245960.1">
    <molecule id="Q8WUP2-2"/>
    <property type="nucleotide sequence ID" value="XM_005245903.2"/>
</dbReference>
<dbReference type="RefSeq" id="XP_005245966.1">
    <property type="nucleotide sequence ID" value="XM_005245909.3"/>
</dbReference>
<dbReference type="RefSeq" id="XP_006710767.1">
    <molecule id="Q8WUP2-2"/>
    <property type="nucleotide sequence ID" value="XM_006710704.4"/>
</dbReference>
<dbReference type="RefSeq" id="XP_006710768.1">
    <molecule id="Q8WUP2-2"/>
    <property type="nucleotide sequence ID" value="XM_006710705.2"/>
</dbReference>
<dbReference type="RefSeq" id="XP_011539918.1">
    <molecule id="Q8WUP2-2"/>
    <property type="nucleotide sequence ID" value="XM_011541616.3"/>
</dbReference>
<dbReference type="RefSeq" id="XP_011539919.1">
    <molecule id="Q8WUP2-1"/>
    <property type="nucleotide sequence ID" value="XM_011541617.3"/>
</dbReference>
<dbReference type="RefSeq" id="XP_016857008.1">
    <molecule id="Q8WUP2-2"/>
    <property type="nucleotide sequence ID" value="XM_017001519.3"/>
</dbReference>
<dbReference type="RefSeq" id="XP_016857009.1">
    <molecule id="Q8WUP2-2"/>
    <property type="nucleotide sequence ID" value="XM_017001520.3"/>
</dbReference>
<dbReference type="RefSeq" id="XP_016857010.1">
    <molecule id="Q8WUP2-2"/>
    <property type="nucleotide sequence ID" value="XM_017001521.3"/>
</dbReference>
<dbReference type="RefSeq" id="XP_016857011.1">
    <property type="nucleotide sequence ID" value="XM_017001522.1"/>
</dbReference>
<dbReference type="RefSeq" id="XP_016857012.1">
    <molecule id="Q8WUP2-2"/>
    <property type="nucleotide sequence ID" value="XM_017001523.2"/>
</dbReference>
<dbReference type="RefSeq" id="XP_016857013.1">
    <molecule id="Q8WUP2-2"/>
    <property type="nucleotide sequence ID" value="XM_017001524.2"/>
</dbReference>
<dbReference type="RefSeq" id="XP_016857014.1">
    <molecule id="Q8WUP2-1"/>
    <property type="nucleotide sequence ID" value="XM_017001525.2"/>
</dbReference>
<dbReference type="RefSeq" id="XP_047279060.1">
    <molecule id="Q8WUP2-1"/>
    <property type="nucleotide sequence ID" value="XM_047423104.1"/>
</dbReference>
<dbReference type="RefSeq" id="XP_047279066.1">
    <molecule id="Q8WUP2-1"/>
    <property type="nucleotide sequence ID" value="XM_047423110.1"/>
</dbReference>
<dbReference type="RefSeq" id="XP_047279068.1">
    <molecule id="Q8WUP2-1"/>
    <property type="nucleotide sequence ID" value="XM_047423112.1"/>
</dbReference>
<dbReference type="RefSeq" id="XP_047279072.1">
    <molecule id="Q8WUP2-1"/>
    <property type="nucleotide sequence ID" value="XM_047423116.1"/>
</dbReference>
<dbReference type="RefSeq" id="XP_047279079.1">
    <molecule id="Q8WUP2-1"/>
    <property type="nucleotide sequence ID" value="XM_047423123.1"/>
</dbReference>
<dbReference type="RefSeq" id="XP_047279084.1">
    <molecule id="Q8WUP2-1"/>
    <property type="nucleotide sequence ID" value="XM_047423128.1"/>
</dbReference>
<dbReference type="RefSeq" id="XP_047279085.1">
    <molecule id="Q8WUP2-1"/>
    <property type="nucleotide sequence ID" value="XM_047423129.1"/>
</dbReference>
<dbReference type="RefSeq" id="XP_047279089.1">
    <molecule id="Q8WUP2-1"/>
    <property type="nucleotide sequence ID" value="XM_047423133.1"/>
</dbReference>
<dbReference type="RefSeq" id="XP_047279094.1">
    <molecule id="Q8WUP2-1"/>
    <property type="nucleotide sequence ID" value="XM_047423138.1"/>
</dbReference>
<dbReference type="RefSeq" id="XP_047279097.1">
    <molecule id="Q8WUP2-1"/>
    <property type="nucleotide sequence ID" value="XM_047423141.1"/>
</dbReference>
<dbReference type="RefSeq" id="XP_047279099.1">
    <molecule id="Q8WUP2-1"/>
    <property type="nucleotide sequence ID" value="XM_047423143.1"/>
</dbReference>
<dbReference type="PDB" id="2K9U">
    <property type="method" value="NMR"/>
    <property type="chains" value="B=1-24"/>
</dbReference>
<dbReference type="PDB" id="2W0P">
    <property type="method" value="X-ray"/>
    <property type="resolution" value="1.90 A"/>
    <property type="chains" value="C=5-19"/>
</dbReference>
<dbReference type="PDB" id="4P3W">
    <property type="method" value="X-ray"/>
    <property type="resolution" value="2.00 A"/>
    <property type="chains" value="G/H/I/J/K/L=5-28"/>
</dbReference>
<dbReference type="PDBsum" id="2K9U"/>
<dbReference type="PDBsum" id="2W0P"/>
<dbReference type="PDBsum" id="4P3W"/>
<dbReference type="BMRB" id="Q8WUP2"/>
<dbReference type="SMR" id="Q8WUP2"/>
<dbReference type="BioGRID" id="120128">
    <property type="interactions" value="52"/>
</dbReference>
<dbReference type="FunCoup" id="Q8WUP2">
    <property type="interactions" value="132"/>
</dbReference>
<dbReference type="IntAct" id="Q8WUP2">
    <property type="interactions" value="38"/>
</dbReference>
<dbReference type="STRING" id="9606.ENSP00000416387"/>
<dbReference type="GlyGen" id="Q8WUP2">
    <property type="glycosylation" value="1 site, 1 O-linked glycan (1 site)"/>
</dbReference>
<dbReference type="iPTMnet" id="Q8WUP2"/>
<dbReference type="MetOSite" id="Q8WUP2"/>
<dbReference type="PhosphoSitePlus" id="Q8WUP2"/>
<dbReference type="SwissPalm" id="Q8WUP2"/>
<dbReference type="BioMuta" id="FBLIM1"/>
<dbReference type="DMDM" id="125987829"/>
<dbReference type="jPOST" id="Q8WUP2"/>
<dbReference type="MassIVE" id="Q8WUP2"/>
<dbReference type="PaxDb" id="9606-ENSP00000416387"/>
<dbReference type="PeptideAtlas" id="Q8WUP2"/>
<dbReference type="ProteomicsDB" id="74698">
    <molecule id="Q8WUP2-1"/>
</dbReference>
<dbReference type="ProteomicsDB" id="74699">
    <molecule id="Q8WUP2-2"/>
</dbReference>
<dbReference type="ProteomicsDB" id="74700">
    <molecule id="Q8WUP2-3"/>
</dbReference>
<dbReference type="Pumba" id="Q8WUP2"/>
<dbReference type="Antibodypedia" id="14407">
    <property type="antibodies" value="259 antibodies from 29 providers"/>
</dbReference>
<dbReference type="DNASU" id="54751"/>
<dbReference type="Ensembl" id="ENST00000332305.5">
    <molecule id="Q8WUP2-3"/>
    <property type="protein sequence ID" value="ENSP00000364920.2"/>
    <property type="gene ID" value="ENSG00000162458.13"/>
</dbReference>
<dbReference type="Ensembl" id="ENST00000375766.8">
    <molecule id="Q8WUP2-1"/>
    <property type="protein sequence ID" value="ENSP00000364921.3"/>
    <property type="gene ID" value="ENSG00000162458.13"/>
</dbReference>
<dbReference type="Ensembl" id="ENST00000375771.5">
    <molecule id="Q8WUP2-1"/>
    <property type="protein sequence ID" value="ENSP00000364926.1"/>
    <property type="gene ID" value="ENSG00000162458.13"/>
</dbReference>
<dbReference type="Ensembl" id="ENST00000441801.6">
    <molecule id="Q8WUP2-2"/>
    <property type="protein sequence ID" value="ENSP00000416387.2"/>
    <property type="gene ID" value="ENSG00000162458.13"/>
</dbReference>
<dbReference type="GeneID" id="54751"/>
<dbReference type="KEGG" id="hsa:54751"/>
<dbReference type="MANE-Select" id="ENST00000375766.8">
    <property type="protein sequence ID" value="ENSP00000364921.3"/>
    <property type="RefSeq nucleotide sequence ID" value="NM_017556.4"/>
    <property type="RefSeq protein sequence ID" value="NP_060026.2"/>
</dbReference>
<dbReference type="UCSC" id="uc001axd.2">
    <molecule id="Q8WUP2-1"/>
    <property type="organism name" value="human"/>
</dbReference>
<dbReference type="AGR" id="HGNC:24686"/>
<dbReference type="CTD" id="54751"/>
<dbReference type="DisGeNET" id="54751"/>
<dbReference type="GeneCards" id="FBLIM1"/>
<dbReference type="HGNC" id="HGNC:24686">
    <property type="gene designation" value="FBLIM1"/>
</dbReference>
<dbReference type="HPA" id="ENSG00000162458">
    <property type="expression patterns" value="Low tissue specificity"/>
</dbReference>
<dbReference type="MIM" id="607747">
    <property type="type" value="gene"/>
</dbReference>
<dbReference type="neXtProt" id="NX_Q8WUP2"/>
<dbReference type="OpenTargets" id="ENSG00000162458"/>
<dbReference type="PharmGKB" id="PA142671776"/>
<dbReference type="VEuPathDB" id="HostDB:ENSG00000162458"/>
<dbReference type="eggNOG" id="KOG1701">
    <property type="taxonomic scope" value="Eukaryota"/>
</dbReference>
<dbReference type="GeneTree" id="ENSGT00940000159003"/>
<dbReference type="HOGENOM" id="CLU_062552_0_0_1"/>
<dbReference type="InParanoid" id="Q8WUP2"/>
<dbReference type="OMA" id="CEVCVIQ"/>
<dbReference type="OrthoDB" id="25414at2759"/>
<dbReference type="PAN-GO" id="Q8WUP2">
    <property type="GO annotations" value="4 GO annotations based on evolutionary models"/>
</dbReference>
<dbReference type="PhylomeDB" id="Q8WUP2"/>
<dbReference type="TreeFam" id="TF320310"/>
<dbReference type="PathwayCommons" id="Q8WUP2"/>
<dbReference type="Reactome" id="R-HSA-446353">
    <property type="pathway name" value="Cell-extracellular matrix interactions"/>
</dbReference>
<dbReference type="SignaLink" id="Q8WUP2"/>
<dbReference type="SIGNOR" id="Q8WUP2"/>
<dbReference type="BioGRID-ORCS" id="54751">
    <property type="hits" value="192 hits in 1154 CRISPR screens"/>
</dbReference>
<dbReference type="ChiTaRS" id="FBLIM1">
    <property type="organism name" value="human"/>
</dbReference>
<dbReference type="EvolutionaryTrace" id="Q8WUP2"/>
<dbReference type="GeneWiki" id="FBLIM1"/>
<dbReference type="GenomeRNAi" id="54751"/>
<dbReference type="Pharos" id="Q8WUP2">
    <property type="development level" value="Tbio"/>
</dbReference>
<dbReference type="PRO" id="PR:Q8WUP2"/>
<dbReference type="Proteomes" id="UP000005640">
    <property type="component" value="Chromosome 1"/>
</dbReference>
<dbReference type="RNAct" id="Q8WUP2">
    <property type="molecule type" value="protein"/>
</dbReference>
<dbReference type="Bgee" id="ENSG00000162458">
    <property type="expression patterns" value="Expressed in right coronary artery and 161 other cell types or tissues"/>
</dbReference>
<dbReference type="ExpressionAtlas" id="Q8WUP2">
    <property type="expression patterns" value="baseline and differential"/>
</dbReference>
<dbReference type="GO" id="GO:0030054">
    <property type="term" value="C:cell junction"/>
    <property type="evidence" value="ECO:0000314"/>
    <property type="project" value="HPA"/>
</dbReference>
<dbReference type="GO" id="GO:0071944">
    <property type="term" value="C:cell periphery"/>
    <property type="evidence" value="ECO:0000314"/>
    <property type="project" value="ARUK-UCL"/>
</dbReference>
<dbReference type="GO" id="GO:0005737">
    <property type="term" value="C:cytoplasm"/>
    <property type="evidence" value="ECO:0000314"/>
    <property type="project" value="ARUK-UCL"/>
</dbReference>
<dbReference type="GO" id="GO:0005829">
    <property type="term" value="C:cytosol"/>
    <property type="evidence" value="ECO:0000304"/>
    <property type="project" value="Reactome"/>
</dbReference>
<dbReference type="GO" id="GO:0001650">
    <property type="term" value="C:fibrillar center"/>
    <property type="evidence" value="ECO:0000314"/>
    <property type="project" value="HPA"/>
</dbReference>
<dbReference type="GO" id="GO:0005925">
    <property type="term" value="C:focal adhesion"/>
    <property type="evidence" value="ECO:0000314"/>
    <property type="project" value="ARUK-UCL"/>
</dbReference>
<dbReference type="GO" id="GO:0001725">
    <property type="term" value="C:stress fiber"/>
    <property type="evidence" value="ECO:0000314"/>
    <property type="project" value="UniProtKB"/>
</dbReference>
<dbReference type="GO" id="GO:0031005">
    <property type="term" value="F:filamin binding"/>
    <property type="evidence" value="ECO:0000314"/>
    <property type="project" value="UniProtKB"/>
</dbReference>
<dbReference type="GO" id="GO:0046872">
    <property type="term" value="F:metal ion binding"/>
    <property type="evidence" value="ECO:0007669"/>
    <property type="project" value="UniProtKB-KW"/>
</dbReference>
<dbReference type="GO" id="GO:0098609">
    <property type="term" value="P:cell-cell adhesion"/>
    <property type="evidence" value="ECO:0000315"/>
    <property type="project" value="UniProtKB"/>
</dbReference>
<dbReference type="GO" id="GO:0008360">
    <property type="term" value="P:regulation of cell shape"/>
    <property type="evidence" value="ECO:0007669"/>
    <property type="project" value="UniProtKB-KW"/>
</dbReference>
<dbReference type="GO" id="GO:0033623">
    <property type="term" value="P:regulation of integrin activation"/>
    <property type="evidence" value="ECO:0000315"/>
    <property type="project" value="UniProtKB"/>
</dbReference>
<dbReference type="CDD" id="cd09372">
    <property type="entry name" value="LIM2_FBLP-1"/>
    <property type="match status" value="1"/>
</dbReference>
<dbReference type="DisProt" id="DP01310"/>
<dbReference type="FunFam" id="2.10.110.10:FF:000086">
    <property type="entry name" value="Filamin binding LIM protein 1"/>
    <property type="match status" value="1"/>
</dbReference>
<dbReference type="FunFam" id="2.10.110.10:FF:000088">
    <property type="entry name" value="Filamin binding LIM protein 1"/>
    <property type="match status" value="1"/>
</dbReference>
<dbReference type="FunFam" id="2.10.110.10:FF:000097">
    <property type="entry name" value="Filamin-binding LIM protein 1"/>
    <property type="match status" value="1"/>
</dbReference>
<dbReference type="Gene3D" id="2.10.110.10">
    <property type="entry name" value="Cysteine Rich Protein"/>
    <property type="match status" value="3"/>
</dbReference>
<dbReference type="InterPro" id="IPR001781">
    <property type="entry name" value="Znf_LIM"/>
</dbReference>
<dbReference type="PANTHER" id="PTHR24207:SF1">
    <property type="entry name" value="FILAMIN-BINDING LIM PROTEIN 1"/>
    <property type="match status" value="1"/>
</dbReference>
<dbReference type="PANTHER" id="PTHR24207">
    <property type="entry name" value="ZYX102 PROTEIN"/>
    <property type="match status" value="1"/>
</dbReference>
<dbReference type="Pfam" id="PF00412">
    <property type="entry name" value="LIM"/>
    <property type="match status" value="3"/>
</dbReference>
<dbReference type="SMART" id="SM00132">
    <property type="entry name" value="LIM"/>
    <property type="match status" value="3"/>
</dbReference>
<dbReference type="SUPFAM" id="SSF57716">
    <property type="entry name" value="Glucocorticoid receptor-like (DNA-binding domain)"/>
    <property type="match status" value="2"/>
</dbReference>
<dbReference type="PROSITE" id="PS00478">
    <property type="entry name" value="LIM_DOMAIN_1"/>
    <property type="match status" value="3"/>
</dbReference>
<dbReference type="PROSITE" id="PS50023">
    <property type="entry name" value="LIM_DOMAIN_2"/>
    <property type="match status" value="3"/>
</dbReference>
<keyword id="KW-0002">3D-structure</keyword>
<keyword id="KW-0025">Alternative splicing</keyword>
<keyword id="KW-0130">Cell adhesion</keyword>
<keyword id="KW-0965">Cell junction</keyword>
<keyword id="KW-0133">Cell shape</keyword>
<keyword id="KW-0963">Cytoplasm</keyword>
<keyword id="KW-0206">Cytoskeleton</keyword>
<keyword id="KW-0440">LIM domain</keyword>
<keyword id="KW-0479">Metal-binding</keyword>
<keyword id="KW-1267">Proteomics identification</keyword>
<keyword id="KW-1185">Reference proteome</keyword>
<keyword id="KW-0677">Repeat</keyword>
<keyword id="KW-0862">Zinc</keyword>
<evidence type="ECO:0000250" key="1"/>
<evidence type="ECO:0000255" key="2">
    <source>
        <dbReference type="PROSITE-ProRule" id="PRU00125"/>
    </source>
</evidence>
<evidence type="ECO:0000256" key="3">
    <source>
        <dbReference type="SAM" id="MobiDB-lite"/>
    </source>
</evidence>
<evidence type="ECO:0000269" key="4">
    <source>
    </source>
</evidence>
<evidence type="ECO:0000269" key="5">
    <source>
    </source>
</evidence>
<evidence type="ECO:0000269" key="6">
    <source>
    </source>
</evidence>
<evidence type="ECO:0000269" key="7">
    <source>
    </source>
</evidence>
<evidence type="ECO:0000269" key="8">
    <source>
    </source>
</evidence>
<evidence type="ECO:0000269" key="9">
    <source>
    </source>
</evidence>
<evidence type="ECO:0000303" key="10">
    <source>
    </source>
</evidence>
<evidence type="ECO:0000303" key="11">
    <source>
    </source>
</evidence>
<evidence type="ECO:0000303" key="12">
    <source>
    </source>
</evidence>
<evidence type="ECO:0000305" key="13"/>
<evidence type="ECO:0007829" key="14">
    <source>
        <dbReference type="PDB" id="2K9U"/>
    </source>
</evidence>
<evidence type="ECO:0007829" key="15">
    <source>
        <dbReference type="PDB" id="2W0P"/>
    </source>
</evidence>
<feature type="chain" id="PRO_0000075732" description="Filamin-binding LIM protein 1">
    <location>
        <begin position="1"/>
        <end position="373"/>
    </location>
</feature>
<feature type="domain" description="LIM zinc-binding 1" evidence="2">
    <location>
        <begin position="181"/>
        <end position="242"/>
    </location>
</feature>
<feature type="domain" description="LIM zinc-binding 2" evidence="2">
    <location>
        <begin position="243"/>
        <end position="300"/>
    </location>
</feature>
<feature type="domain" description="LIM zinc-binding 3" evidence="2">
    <location>
        <begin position="301"/>
        <end position="370"/>
    </location>
</feature>
<feature type="region of interest" description="Filamin-binding">
    <location>
        <begin position="1"/>
        <end position="70"/>
    </location>
</feature>
<feature type="region of interest" description="Disordered" evidence="3">
    <location>
        <begin position="41"/>
        <end position="119"/>
    </location>
</feature>
<feature type="region of interest" description="Disordered" evidence="3">
    <location>
        <begin position="135"/>
        <end position="176"/>
    </location>
</feature>
<feature type="region of interest" description="FERMT2-binding">
    <location>
        <begin position="276"/>
        <end position="373"/>
    </location>
</feature>
<feature type="compositionally biased region" description="Pro residues" evidence="3">
    <location>
        <begin position="104"/>
        <end position="114"/>
    </location>
</feature>
<feature type="splice variant" id="VSP_008781" description="In isoform 3." evidence="10 11 12">
    <location>
        <begin position="84"/>
        <end position="180"/>
    </location>
</feature>
<feature type="splice variant" id="VSP_008782" description="In isoform 2." evidence="10">
    <original>KFAPVCSICENPIIPRDGKDAFKIECMGRNFHENCYRCEDCRILLSVEPTDQGCYPLNNHLFCKPCHVKRSAAGCC</original>
    <variation>YEKGLCTGWGAGTGRDPSRVKELSLSPGCWARVSCLLVYYKEYYRAGLGAVAHACNPSTLGGRGGWITRSGDRDHPG</variation>
    <location>
        <begin position="298"/>
        <end position="373"/>
    </location>
</feature>
<feature type="sequence variant" id="VAR_050145" description="In dbSNP:rs34375304.">
    <original>R</original>
    <variation>C</variation>
    <location>
        <position position="39"/>
    </location>
</feature>
<feature type="sequence variant" id="VAR_022842" description="In dbSNP:rs10927851." evidence="4 5 6 7">
    <original>S</original>
    <variation>F</variation>
    <location>
        <position position="191"/>
    </location>
</feature>
<feature type="mutagenesis site" description="Localizes to cell-ECM adhesions; abolishes FLNA and FLNC interactions; failed to decorate actin filaments." evidence="5">
    <original>KR</original>
    <variation>TG</variation>
    <location>
        <begin position="7"/>
        <end position="8"/>
    </location>
</feature>
<feature type="strand" evidence="14">
    <location>
        <begin position="5"/>
        <end position="8"/>
    </location>
</feature>
<feature type="strand" evidence="15">
    <location>
        <begin position="9"/>
        <end position="16"/>
    </location>
</feature>
<accession>Q8WUP2</accession>
<accession>B3KNY0</accession>
<accession>Q5VVE0</accession>
<accession>Q5VVE1</accession>
<accession>Q8IX23</accession>
<accession>Q96T00</accession>
<accession>Q9UFD6</accession>
<reference key="1">
    <citation type="journal article" date="2003" name="Cell">
        <title>Migfilin and Mig-2 link focal adhesions to filamin and the actin cytoskeleton and function in cell shape modulation.</title>
        <authorList>
            <person name="Tu Y."/>
            <person name="Wu S."/>
            <person name="Shi X."/>
            <person name="Chen K."/>
            <person name="Wu C."/>
        </authorList>
    </citation>
    <scope>NUCLEOTIDE SEQUENCE [MRNA] (ISOFORMS 1 AND 3)</scope>
    <scope>VARIANT PHE-191</scope>
    <scope>FUNCTION</scope>
    <scope>ALTERNATIVE SPLICING</scope>
    <scope>SUBCELLULAR LOCATION</scope>
    <scope>INTERACTION WITH FERMT2; FLNA AND FLNC</scope>
    <scope>MUTAGENESIS OF 7-LYS-ARG-8</scope>
    <source>
        <tissue>Lung</tissue>
    </source>
</reference>
<reference key="2">
    <citation type="journal article" date="2003" name="J. Biol. Chem.">
        <title>A new member of the LIM protein family binds to filamin B and localizes at stress fibers.</title>
        <authorList>
            <person name="Takafuta T."/>
            <person name="Saeki M."/>
            <person name="Fujimoto T.-T."/>
            <person name="Fujimura K."/>
            <person name="Shapiro S.S."/>
        </authorList>
    </citation>
    <scope>NUCLEOTIDE SEQUENCE [MRNA] (ISOFORMS 1; 2 AND 3)</scope>
    <scope>VARIANT PHE-191</scope>
    <scope>FUNCTION</scope>
    <scope>SUBCELLULAR LOCATION</scope>
    <scope>ALTERNATIVE SPLICING</scope>
    <scope>TISSUE SPECIFICITY</scope>
    <scope>INTERACTION WITH FNLB</scope>
    <source>
        <tissue>Placenta</tissue>
    </source>
</reference>
<reference key="3">
    <citation type="journal article" date="2004" name="Nat. Genet.">
        <title>Complete sequencing and characterization of 21,243 full-length human cDNAs.</title>
        <authorList>
            <person name="Ota T."/>
            <person name="Suzuki Y."/>
            <person name="Nishikawa T."/>
            <person name="Otsuki T."/>
            <person name="Sugiyama T."/>
            <person name="Irie R."/>
            <person name="Wakamatsu A."/>
            <person name="Hayashi K."/>
            <person name="Sato H."/>
            <person name="Nagai K."/>
            <person name="Kimura K."/>
            <person name="Makita H."/>
            <person name="Sekine M."/>
            <person name="Obayashi M."/>
            <person name="Nishi T."/>
            <person name="Shibahara T."/>
            <person name="Tanaka T."/>
            <person name="Ishii S."/>
            <person name="Yamamoto J."/>
            <person name="Saito K."/>
            <person name="Kawai Y."/>
            <person name="Isono Y."/>
            <person name="Nakamura Y."/>
            <person name="Nagahari K."/>
            <person name="Murakami K."/>
            <person name="Yasuda T."/>
            <person name="Iwayanagi T."/>
            <person name="Wagatsuma M."/>
            <person name="Shiratori A."/>
            <person name="Sudo H."/>
            <person name="Hosoiri T."/>
            <person name="Kaku Y."/>
            <person name="Kodaira H."/>
            <person name="Kondo H."/>
            <person name="Sugawara M."/>
            <person name="Takahashi M."/>
            <person name="Kanda K."/>
            <person name="Yokoi T."/>
            <person name="Furuya T."/>
            <person name="Kikkawa E."/>
            <person name="Omura Y."/>
            <person name="Abe K."/>
            <person name="Kamihara K."/>
            <person name="Katsuta N."/>
            <person name="Sato K."/>
            <person name="Tanikawa M."/>
            <person name="Yamazaki M."/>
            <person name="Ninomiya K."/>
            <person name="Ishibashi T."/>
            <person name="Yamashita H."/>
            <person name="Murakawa K."/>
            <person name="Fujimori K."/>
            <person name="Tanai H."/>
            <person name="Kimata M."/>
            <person name="Watanabe M."/>
            <person name="Hiraoka S."/>
            <person name="Chiba Y."/>
            <person name="Ishida S."/>
            <person name="Ono Y."/>
            <person name="Takiguchi S."/>
            <person name="Watanabe S."/>
            <person name="Yosida M."/>
            <person name="Hotuta T."/>
            <person name="Kusano J."/>
            <person name="Kanehori K."/>
            <person name="Takahashi-Fujii A."/>
            <person name="Hara H."/>
            <person name="Tanase T.-O."/>
            <person name="Nomura Y."/>
            <person name="Togiya S."/>
            <person name="Komai F."/>
            <person name="Hara R."/>
            <person name="Takeuchi K."/>
            <person name="Arita M."/>
            <person name="Imose N."/>
            <person name="Musashino K."/>
            <person name="Yuuki H."/>
            <person name="Oshima A."/>
            <person name="Sasaki N."/>
            <person name="Aotsuka S."/>
            <person name="Yoshikawa Y."/>
            <person name="Matsunawa H."/>
            <person name="Ichihara T."/>
            <person name="Shiohata N."/>
            <person name="Sano S."/>
            <person name="Moriya S."/>
            <person name="Momiyama H."/>
            <person name="Satoh N."/>
            <person name="Takami S."/>
            <person name="Terashima Y."/>
            <person name="Suzuki O."/>
            <person name="Nakagawa S."/>
            <person name="Senoh A."/>
            <person name="Mizoguchi H."/>
            <person name="Goto Y."/>
            <person name="Shimizu F."/>
            <person name="Wakebe H."/>
            <person name="Hishigaki H."/>
            <person name="Watanabe T."/>
            <person name="Sugiyama A."/>
            <person name="Takemoto M."/>
            <person name="Kawakami B."/>
            <person name="Yamazaki M."/>
            <person name="Watanabe K."/>
            <person name="Kumagai A."/>
            <person name="Itakura S."/>
            <person name="Fukuzumi Y."/>
            <person name="Fujimori Y."/>
            <person name="Komiyama M."/>
            <person name="Tashiro H."/>
            <person name="Tanigami A."/>
            <person name="Fujiwara T."/>
            <person name="Ono T."/>
            <person name="Yamada K."/>
            <person name="Fujii Y."/>
            <person name="Ozaki K."/>
            <person name="Hirao M."/>
            <person name="Ohmori Y."/>
            <person name="Kawabata A."/>
            <person name="Hikiji T."/>
            <person name="Kobatake N."/>
            <person name="Inagaki H."/>
            <person name="Ikema Y."/>
            <person name="Okamoto S."/>
            <person name="Okitani R."/>
            <person name="Kawakami T."/>
            <person name="Noguchi S."/>
            <person name="Itoh T."/>
            <person name="Shigeta K."/>
            <person name="Senba T."/>
            <person name="Matsumura K."/>
            <person name="Nakajima Y."/>
            <person name="Mizuno T."/>
            <person name="Morinaga M."/>
            <person name="Sasaki M."/>
            <person name="Togashi T."/>
            <person name="Oyama M."/>
            <person name="Hata H."/>
            <person name="Watanabe M."/>
            <person name="Komatsu T."/>
            <person name="Mizushima-Sugano J."/>
            <person name="Satoh T."/>
            <person name="Shirai Y."/>
            <person name="Takahashi Y."/>
            <person name="Nakagawa K."/>
            <person name="Okumura K."/>
            <person name="Nagase T."/>
            <person name="Nomura N."/>
            <person name="Kikuchi H."/>
            <person name="Masuho Y."/>
            <person name="Yamashita R."/>
            <person name="Nakai K."/>
            <person name="Yada T."/>
            <person name="Nakamura Y."/>
            <person name="Ohara O."/>
            <person name="Isogai T."/>
            <person name="Sugano S."/>
        </authorList>
    </citation>
    <scope>NUCLEOTIDE SEQUENCE [LARGE SCALE MRNA] (ISOFORMS 1 AND 3)</scope>
    <scope>VARIANT PHE-191</scope>
    <source>
        <tissue>Brain</tissue>
        <tissue>Teratocarcinoma</tissue>
    </source>
</reference>
<reference key="4">
    <citation type="journal article" date="2006" name="Nature">
        <title>The DNA sequence and biological annotation of human chromosome 1.</title>
        <authorList>
            <person name="Gregory S.G."/>
            <person name="Barlow K.F."/>
            <person name="McLay K.E."/>
            <person name="Kaul R."/>
            <person name="Swarbreck D."/>
            <person name="Dunham A."/>
            <person name="Scott C.E."/>
            <person name="Howe K.L."/>
            <person name="Woodfine K."/>
            <person name="Spencer C.C.A."/>
            <person name="Jones M.C."/>
            <person name="Gillson C."/>
            <person name="Searle S."/>
            <person name="Zhou Y."/>
            <person name="Kokocinski F."/>
            <person name="McDonald L."/>
            <person name="Evans R."/>
            <person name="Phillips K."/>
            <person name="Atkinson A."/>
            <person name="Cooper R."/>
            <person name="Jones C."/>
            <person name="Hall R.E."/>
            <person name="Andrews T.D."/>
            <person name="Lloyd C."/>
            <person name="Ainscough R."/>
            <person name="Almeida J.P."/>
            <person name="Ambrose K.D."/>
            <person name="Anderson F."/>
            <person name="Andrew R.W."/>
            <person name="Ashwell R.I.S."/>
            <person name="Aubin K."/>
            <person name="Babbage A.K."/>
            <person name="Bagguley C.L."/>
            <person name="Bailey J."/>
            <person name="Beasley H."/>
            <person name="Bethel G."/>
            <person name="Bird C.P."/>
            <person name="Bray-Allen S."/>
            <person name="Brown J.Y."/>
            <person name="Brown A.J."/>
            <person name="Buckley D."/>
            <person name="Burton J."/>
            <person name="Bye J."/>
            <person name="Carder C."/>
            <person name="Chapman J.C."/>
            <person name="Clark S.Y."/>
            <person name="Clarke G."/>
            <person name="Clee C."/>
            <person name="Cobley V."/>
            <person name="Collier R.E."/>
            <person name="Corby N."/>
            <person name="Coville G.J."/>
            <person name="Davies J."/>
            <person name="Deadman R."/>
            <person name="Dunn M."/>
            <person name="Earthrowl M."/>
            <person name="Ellington A.G."/>
            <person name="Errington H."/>
            <person name="Frankish A."/>
            <person name="Frankland J."/>
            <person name="French L."/>
            <person name="Garner P."/>
            <person name="Garnett J."/>
            <person name="Gay L."/>
            <person name="Ghori M.R.J."/>
            <person name="Gibson R."/>
            <person name="Gilby L.M."/>
            <person name="Gillett W."/>
            <person name="Glithero R.J."/>
            <person name="Grafham D.V."/>
            <person name="Griffiths C."/>
            <person name="Griffiths-Jones S."/>
            <person name="Grocock R."/>
            <person name="Hammond S."/>
            <person name="Harrison E.S.I."/>
            <person name="Hart E."/>
            <person name="Haugen E."/>
            <person name="Heath P.D."/>
            <person name="Holmes S."/>
            <person name="Holt K."/>
            <person name="Howden P.J."/>
            <person name="Hunt A.R."/>
            <person name="Hunt S.E."/>
            <person name="Hunter G."/>
            <person name="Isherwood J."/>
            <person name="James R."/>
            <person name="Johnson C."/>
            <person name="Johnson D."/>
            <person name="Joy A."/>
            <person name="Kay M."/>
            <person name="Kershaw J.K."/>
            <person name="Kibukawa M."/>
            <person name="Kimberley A.M."/>
            <person name="King A."/>
            <person name="Knights A.J."/>
            <person name="Lad H."/>
            <person name="Laird G."/>
            <person name="Lawlor S."/>
            <person name="Leongamornlert D.A."/>
            <person name="Lloyd D.M."/>
            <person name="Loveland J."/>
            <person name="Lovell J."/>
            <person name="Lush M.J."/>
            <person name="Lyne R."/>
            <person name="Martin S."/>
            <person name="Mashreghi-Mohammadi M."/>
            <person name="Matthews L."/>
            <person name="Matthews N.S.W."/>
            <person name="McLaren S."/>
            <person name="Milne S."/>
            <person name="Mistry S."/>
            <person name="Moore M.J.F."/>
            <person name="Nickerson T."/>
            <person name="O'Dell C.N."/>
            <person name="Oliver K."/>
            <person name="Palmeiri A."/>
            <person name="Palmer S.A."/>
            <person name="Parker A."/>
            <person name="Patel D."/>
            <person name="Pearce A.V."/>
            <person name="Peck A.I."/>
            <person name="Pelan S."/>
            <person name="Phelps K."/>
            <person name="Phillimore B.J."/>
            <person name="Plumb R."/>
            <person name="Rajan J."/>
            <person name="Raymond C."/>
            <person name="Rouse G."/>
            <person name="Saenphimmachak C."/>
            <person name="Sehra H.K."/>
            <person name="Sheridan E."/>
            <person name="Shownkeen R."/>
            <person name="Sims S."/>
            <person name="Skuce C.D."/>
            <person name="Smith M."/>
            <person name="Steward C."/>
            <person name="Subramanian S."/>
            <person name="Sycamore N."/>
            <person name="Tracey A."/>
            <person name="Tromans A."/>
            <person name="Van Helmond Z."/>
            <person name="Wall M."/>
            <person name="Wallis J.M."/>
            <person name="White S."/>
            <person name="Whitehead S.L."/>
            <person name="Wilkinson J.E."/>
            <person name="Willey D.L."/>
            <person name="Williams H."/>
            <person name="Wilming L."/>
            <person name="Wray P.W."/>
            <person name="Wu Z."/>
            <person name="Coulson A."/>
            <person name="Vaudin M."/>
            <person name="Sulston J.E."/>
            <person name="Durbin R.M."/>
            <person name="Hubbard T."/>
            <person name="Wooster R."/>
            <person name="Dunham I."/>
            <person name="Carter N.P."/>
            <person name="McVean G."/>
            <person name="Ross M.T."/>
            <person name="Harrow J."/>
            <person name="Olson M.V."/>
            <person name="Beck S."/>
            <person name="Rogers J."/>
            <person name="Bentley D.R."/>
        </authorList>
    </citation>
    <scope>NUCLEOTIDE SEQUENCE [LARGE SCALE GENOMIC DNA]</scope>
</reference>
<reference key="5">
    <citation type="journal article" date="2004" name="Genome Res.">
        <title>The status, quality, and expansion of the NIH full-length cDNA project: the Mammalian Gene Collection (MGC).</title>
        <authorList>
            <consortium name="The MGC Project Team"/>
        </authorList>
    </citation>
    <scope>NUCLEOTIDE SEQUENCE [LARGE SCALE MRNA] (ISOFORM 1)</scope>
    <scope>VARIANT PHE-191</scope>
    <source>
        <tissue>Cervix adenocarcinoma</tissue>
    </source>
</reference>
<reference key="6">
    <citation type="journal article" date="2007" name="BMC Genomics">
        <title>The full-ORF clone resource of the German cDNA consortium.</title>
        <authorList>
            <person name="Bechtel S."/>
            <person name="Rosenfelder H."/>
            <person name="Duda A."/>
            <person name="Schmidt C.P."/>
            <person name="Ernst U."/>
            <person name="Wellenreuther R."/>
            <person name="Mehrle A."/>
            <person name="Schuster C."/>
            <person name="Bahr A."/>
            <person name="Bloecker H."/>
            <person name="Heubner D."/>
            <person name="Hoerlein A."/>
            <person name="Michel G."/>
            <person name="Wedler H."/>
            <person name="Koehrer K."/>
            <person name="Ottenwaelder B."/>
            <person name="Poustka A."/>
            <person name="Wiemann S."/>
            <person name="Schupp I."/>
        </authorList>
    </citation>
    <scope>NUCLEOTIDE SEQUENCE [LARGE SCALE MRNA] OF 174-373 (ISOFORM 1)</scope>
    <source>
        <tissue>Testis</tissue>
    </source>
</reference>
<reference key="7">
    <citation type="journal article" date="2008" name="J. Biol. Chem.">
        <title>Structural basis of the migfilin-filamin interaction and competition with integrin beta tails.</title>
        <authorList>
            <person name="Lad Y."/>
            <person name="Jiang P."/>
            <person name="Ruskamo S."/>
            <person name="Harburger D.S."/>
            <person name="Ylanne J."/>
            <person name="Campbell I.D."/>
            <person name="Calderwood D.A."/>
        </authorList>
    </citation>
    <scope>X-RAY CRYSTALLOGRAPHY (1.9 ANGSTROMS) OF 5-19 IN COMPLEX WITH FLNA</scope>
    <scope>INTERACTION WITH FLNA; FLNB AND FLNC</scope>
    <scope>FUNCTION</scope>
    <scope>SUBCELLULAR LOCATION</scope>
    <scope>DOMAIN</scope>
</reference>
<reference key="8">
    <citation type="journal article" date="2009" name="J. Biol. Chem.">
        <title>Migfilin, a molecular switch in regulation of integrin activation.</title>
        <authorList>
            <person name="Ithychanda S.S."/>
            <person name="Das M."/>
            <person name="Ma Y.Q."/>
            <person name="Ding K."/>
            <person name="Wang X."/>
            <person name="Gupta S."/>
            <person name="Wu C."/>
            <person name="Plow E.F."/>
            <person name="Qin J."/>
        </authorList>
    </citation>
    <scope>STRUCTURE BY NMR OF 1-24 IN COMPLEX WITH FLNC</scope>
    <scope>INTERACTION WITH FLNA AND FLNC</scope>
    <scope>FUNCTION</scope>
</reference>
<organism>
    <name type="scientific">Homo sapiens</name>
    <name type="common">Human</name>
    <dbReference type="NCBI Taxonomy" id="9606"/>
    <lineage>
        <taxon>Eukaryota</taxon>
        <taxon>Metazoa</taxon>
        <taxon>Chordata</taxon>
        <taxon>Craniata</taxon>
        <taxon>Vertebrata</taxon>
        <taxon>Euteleostomi</taxon>
        <taxon>Mammalia</taxon>
        <taxon>Eutheria</taxon>
        <taxon>Euarchontoglires</taxon>
        <taxon>Primates</taxon>
        <taxon>Haplorrhini</taxon>
        <taxon>Catarrhini</taxon>
        <taxon>Hominidae</taxon>
        <taxon>Homo</taxon>
    </lineage>
</organism>
<comment type="function">
    <text evidence="4 5 8 9">Serves as an anchoring site for cell-ECM adhesion proteins and filamin-containing actin filaments. Is implicated in cell shape modulation (spreading) and motility. May participate in the regulation of filamin-mediated cross-linking and stabilization of actin filaments. May also regulate the assembly of filamin-containing signaling complexes that control actin assembly. Promotes dissociation of FLNA from ITGB3 and ITGB7. Promotes activation of integrins and regulates integrin-mediated cell-cell adhesion.</text>
</comment>
<comment type="subunit">
    <text evidence="1 4 5 8 9">Interacts with NKX2-5 (By similarity). Isoform 1 and isoform 3 interact with FERMT2, FLNA, FLNB and FLNC. Isoform 2 interacts with FLNB.</text>
</comment>
<comment type="interaction">
    <interactant intactId="EBI-3864120">
        <id>Q8WUP2</id>
    </interactant>
    <interactant intactId="EBI-11976299">
        <id>Q5BKX5-3</id>
        <label>ACTMAP</label>
    </interactant>
    <organismsDiffer>false</organismsDiffer>
    <experiments>3</experiments>
</comment>
<comment type="interaction">
    <interactant intactId="EBI-3864120">
        <id>Q8WUP2</id>
    </interactant>
    <interactant intactId="EBI-3922811">
        <id>Q96EY9</id>
        <label>ADAT3</label>
    </interactant>
    <organismsDiffer>false</organismsDiffer>
    <experiments>3</experiments>
</comment>
<comment type="interaction">
    <interactant intactId="EBI-3864120">
        <id>Q8WUP2</id>
    </interactant>
    <interactant intactId="EBI-1051556">
        <id>O60888</id>
        <label>CUTA</label>
    </interactant>
    <organismsDiffer>false</organismsDiffer>
    <experiments>6</experiments>
</comment>
<comment type="interaction">
    <interactant intactId="EBI-3864120">
        <id>Q8WUP2</id>
    </interactant>
    <interactant intactId="EBI-10979071">
        <id>O60888-3</id>
        <label>CUTA</label>
    </interactant>
    <organismsDiffer>false</organismsDiffer>
    <experiments>3</experiments>
</comment>
<comment type="interaction">
    <interactant intactId="EBI-3864120">
        <id>Q8WUP2</id>
    </interactant>
    <interactant intactId="EBI-2868501">
        <id>Q6NXT2</id>
        <label>H3-5</label>
    </interactant>
    <organismsDiffer>false</organismsDiffer>
    <experiments>3</experiments>
</comment>
<comment type="interaction">
    <interactant intactId="EBI-3864120">
        <id>Q8WUP2</id>
    </interactant>
    <interactant intactId="EBI-79722">
        <id>P68431</id>
        <label>H3C12</label>
    </interactant>
    <organismsDiffer>false</organismsDiffer>
    <experiments>3</experiments>
</comment>
<comment type="interaction">
    <interactant intactId="EBI-3864120">
        <id>Q8WUP2</id>
    </interactant>
    <interactant intactId="EBI-742259">
        <id>Q8TAP4</id>
        <label>LMO3</label>
    </interactant>
    <organismsDiffer>false</organismsDiffer>
    <experiments>5</experiments>
</comment>
<comment type="interaction">
    <interactant intactId="EBI-3864120">
        <id>Q8WUP2</id>
    </interactant>
    <interactant intactId="EBI-11742507">
        <id>Q8TAP4-4</id>
        <label>LMO3</label>
    </interactant>
    <organismsDiffer>false</organismsDiffer>
    <experiments>3</experiments>
</comment>
<comment type="interaction">
    <interactant intactId="EBI-3864120">
        <id>Q8WUP2</id>
    </interactant>
    <interactant intactId="EBI-12037847">
        <id>Q6ZSJ9</id>
        <label>SHISA6</label>
    </interactant>
    <organismsDiffer>false</organismsDiffer>
    <experiments>3</experiments>
</comment>
<comment type="subcellular location">
    <subcellularLocation>
        <location evidence="5 8">Cell junction</location>
        <location evidence="5 8">Focal adhesion</location>
    </subcellularLocation>
    <subcellularLocation>
        <location evidence="4 5 8">Cytoplasm</location>
        <location evidence="4 5 8">Cytoskeleton</location>
        <location evidence="4 5 8">Stress fiber</location>
    </subcellularLocation>
    <text evidence="4 5 8">Associated with actin stress fiber at cell-ECM focal adhesion sites (PubMed:12679033, PubMed:18829455). Isoform 1 and isoform 3 are recruited and localized at actin stress fibers and clustered at cell-EMC adhesion sites through interaction with FERMT2 (PubMed:12679033). Isoform 2 is localized at actin stress fibers (PubMed:12496242).</text>
</comment>
<comment type="alternative products">
    <event type="alternative splicing"/>
    <isoform>
        <id>Q8WUP2-1</id>
        <name>1</name>
        <name>FBLP-1A</name>
        <sequence type="displayed"/>
    </isoform>
    <isoform>
        <id>Q8WUP2-2</id>
        <name>2</name>
        <name>FBLP-1</name>
        <sequence type="described" ref="VSP_008782"/>
    </isoform>
    <isoform>
        <id>Q8WUP2-3</id>
        <name>3</name>
        <name>FBLP-1B</name>
        <sequence type="described" ref="VSP_008781"/>
    </isoform>
</comment>
<comment type="tissue specificity">
    <text evidence="4">Isoform 1 and isoform 3 are expressed in heart, kidney, lung, pancreas, placenta and platelets. Isoform 2 is expressed in brain, heart, kidney, lung, pancreas, placenta, skeletal muscle and platelets.</text>
</comment>
<comment type="domain">
    <text evidence="8">The N-terminal region is intrinsically disordered.</text>
</comment>
<comment type="miscellaneous">
    <molecule>Isoform 2</molecule>
    <text evidence="13">May be due to competing donor splice site.</text>
</comment>
<comment type="miscellaneous">
    <molecule>Isoform 3</molecule>
    <text evidence="13">May be due to exon skipping.</text>
</comment>
<sequence length="373" mass="40670">MASKPEKRVASSVFITLAPPRRDVAVAEEVRQAVCEARRGRPWEAPAPMKTPEAGLAGRPSPWTTPGRAAATVPAAPMQLFNGGCPPPPPVLDGEDVLPDLDLLPPPPPPPPVLLPSEEEAPAPMGASLIADLEQLHLSPPPPPPQAPAEGPSVQPGPLRPMEEELPPPPAEPVEKGASTDICAFCHKTVSPRELAVEAMKRQYHAQCFTCRTCRRQLAGQSFYQKDGRPLCEPCYQDTLERCGKCGEVVRDHIIRALGQAFHPSCFTCVTCARCIGDESFALGSQNEVYCLDDFYRKFAPVCSICENPIIPRDGKDAFKIECMGRNFHENCYRCEDCRILLSVEPTDQGCYPLNNHLFCKPCHVKRSAAGCC</sequence>